<protein>
    <recommendedName>
        <fullName>U4/U6 small nuclear ribonucleoprotein Prp31</fullName>
    </recommendedName>
    <alternativeName>
        <fullName>Pre-mRNA-processing factor 31</fullName>
    </alternativeName>
</protein>
<evidence type="ECO:0000250" key="1">
    <source>
        <dbReference type="UniProtKB" id="Q8WWY3"/>
    </source>
</evidence>
<evidence type="ECO:0000255" key="2">
    <source>
        <dbReference type="PROSITE-ProRule" id="PRU00690"/>
    </source>
</evidence>
<evidence type="ECO:0000256" key="3">
    <source>
        <dbReference type="SAM" id="MobiDB-lite"/>
    </source>
</evidence>
<evidence type="ECO:0000305" key="4"/>
<gene>
    <name type="primary">prpf31</name>
</gene>
<feature type="chain" id="PRO_0000227802" description="U4/U6 small nuclear ribonucleoprotein Prp31">
    <location>
        <begin position="1"/>
        <end position="498"/>
    </location>
</feature>
<feature type="domain" description="Nop" evidence="2">
    <location>
        <begin position="214"/>
        <end position="332"/>
    </location>
</feature>
<feature type="region of interest" description="Disordered" evidence="3">
    <location>
        <begin position="1"/>
        <end position="24"/>
    </location>
</feature>
<feature type="region of interest" description="Disordered" evidence="3">
    <location>
        <begin position="333"/>
        <end position="356"/>
    </location>
</feature>
<feature type="coiled-coil region" evidence="1">
    <location>
        <begin position="84"/>
        <end position="119"/>
    </location>
</feature>
<feature type="coiled-coil region" evidence="1">
    <location>
        <begin position="180"/>
        <end position="214"/>
    </location>
</feature>
<feature type="short sequence motif" description="Nuclear localization signal (NLS)" evidence="1">
    <location>
        <begin position="350"/>
        <end position="363"/>
    </location>
</feature>
<feature type="compositionally biased region" description="Acidic residues" evidence="3">
    <location>
        <begin position="7"/>
        <end position="24"/>
    </location>
</feature>
<feature type="site" description="Interaction with U4 snRNA" evidence="1">
    <location>
        <position position="246"/>
    </location>
</feature>
<feature type="site" description="Interaction with U4 snRNA and U4atac snRNA" evidence="1">
    <location>
        <position position="269"/>
    </location>
</feature>
<feature type="site" description="Interaction with U4atac snRNA" evidence="1">
    <location>
        <position position="288"/>
    </location>
</feature>
<feature type="site" description="Interaction with U4 snRNA and U4atac snRNA" evidence="1">
    <location>
        <position position="292"/>
    </location>
</feature>
<feature type="site" description="Interaction with U4 snRNA and U4atac snRNA" evidence="1">
    <location>
        <position position="297"/>
    </location>
</feature>
<name>PRP31_XENLA</name>
<organism>
    <name type="scientific">Xenopus laevis</name>
    <name type="common">African clawed frog</name>
    <dbReference type="NCBI Taxonomy" id="8355"/>
    <lineage>
        <taxon>Eukaryota</taxon>
        <taxon>Metazoa</taxon>
        <taxon>Chordata</taxon>
        <taxon>Craniata</taxon>
        <taxon>Vertebrata</taxon>
        <taxon>Euteleostomi</taxon>
        <taxon>Amphibia</taxon>
        <taxon>Batrachia</taxon>
        <taxon>Anura</taxon>
        <taxon>Pipoidea</taxon>
        <taxon>Pipidae</taxon>
        <taxon>Xenopodinae</taxon>
        <taxon>Xenopus</taxon>
        <taxon>Xenopus</taxon>
    </lineage>
</organism>
<proteinExistence type="evidence at transcript level"/>
<reference key="1">
    <citation type="submission" date="2004-10" db="EMBL/GenBank/DDBJ databases">
        <authorList>
            <consortium name="NIH - Xenopus Gene Collection (XGC) project"/>
        </authorList>
    </citation>
    <scope>NUCLEOTIDE SEQUENCE [LARGE SCALE MRNA]</scope>
    <source>
        <tissue>Embryo</tissue>
    </source>
</reference>
<comment type="function">
    <text evidence="1">Involved in pre-mRNA splicing as component of the spliceosome. Required for the assembly of the U4/U5/U6 tri-snRNP complex, one of the building blocks of the spliceosome.</text>
</comment>
<comment type="subunit">
    <text evidence="1">Identified in the spliceosome B complex. Component of the U4/U6-U5 tri-snRNP complex. Component of some MLL1/MLL complex.</text>
</comment>
<comment type="subcellular location">
    <subcellularLocation>
        <location evidence="1">Nucleus</location>
    </subcellularLocation>
    <subcellularLocation>
        <location evidence="1">Nucleus speckle</location>
    </subcellularLocation>
    <subcellularLocation>
        <location evidence="1">Nucleus</location>
        <location evidence="1">Cajal body</location>
    </subcellularLocation>
    <text evidence="1">Predominantly found in speckles and in Cajal bodies.</text>
</comment>
<comment type="domain">
    <text evidence="1">Interacts with the snRNP via the Nop domain.</text>
</comment>
<comment type="domain">
    <text evidence="1">The coiled coil domain is formed by two non-contiguous helices.</text>
</comment>
<comment type="similarity">
    <text evidence="4">Belongs to the PRP31 family.</text>
</comment>
<sequence length="498" mass="55563">MSLADELLADLEEAAEEEEENLIDEDDLETIEEVDEEMQVDLNAESVKSIAKLSDSKLFSEILLKIEGYIQKQPKASEVMGPVEAAPEYKVIVDANNLTVEIENELNIIHKFIRDKYSKRFPELESLVPNALDYIRTVKELGNNLDKCKNNENLQQILTNATIMVVSVTASTTQGQQLTDEELERIEEACDMALELNQSKHRIYEYVESRMSFIAPNLSIIVGASTAAKIMGIAGGLTNLSKMPACNVMLLGAQRKTLTGFSSTSVLPHTGYIYHSEIVQSLPSDLHRKAARLVSAKCTLASRVDSFHENPEGKIGYDLKEEIERKFDKWQEPPPVKQVKPLPAPLDGQRKKRGGRRYRKMKERLGLTEIRKQANRMSFGEIEEDAYQEDLGFSLGHLGKSGSGRIRQAQVNEATKARISKTLQRTLQKQSVVYGGKSTVRDRSSGTASSVAFTPLQGLEIVNPQAAEKKVAEANQKYFSSMAEFLKVKSEKSGTMTQ</sequence>
<accession>Q5U5C5</accession>
<keyword id="KW-0175">Coiled coil</keyword>
<keyword id="KW-0507">mRNA processing</keyword>
<keyword id="KW-0508">mRNA splicing</keyword>
<keyword id="KW-0539">Nucleus</keyword>
<keyword id="KW-1185">Reference proteome</keyword>
<keyword id="KW-0687">Ribonucleoprotein</keyword>
<keyword id="KW-0694">RNA-binding</keyword>
<keyword id="KW-0747">Spliceosome</keyword>
<dbReference type="EMBL" id="BC084759">
    <property type="protein sequence ID" value="AAH84759.1"/>
    <property type="molecule type" value="mRNA"/>
</dbReference>
<dbReference type="RefSeq" id="NP_001088437.1">
    <property type="nucleotide sequence ID" value="NM_001094968.1"/>
</dbReference>
<dbReference type="SMR" id="Q5U5C5"/>
<dbReference type="BioGRID" id="105381">
    <property type="interactions" value="1"/>
</dbReference>
<dbReference type="DNASU" id="495301"/>
<dbReference type="GeneID" id="495301"/>
<dbReference type="KEGG" id="xla:495301"/>
<dbReference type="AGR" id="Xenbase:XB-GENE-865857"/>
<dbReference type="CTD" id="495301"/>
<dbReference type="Xenbase" id="XB-GENE-865857">
    <property type="gene designation" value="prpf31.S"/>
</dbReference>
<dbReference type="OrthoDB" id="4771285at2759"/>
<dbReference type="Proteomes" id="UP000186698">
    <property type="component" value="Chromosome 7S"/>
</dbReference>
<dbReference type="Bgee" id="495301">
    <property type="expression patterns" value="Expressed in gastrula and 19 other cell types or tissues"/>
</dbReference>
<dbReference type="GO" id="GO:0015030">
    <property type="term" value="C:Cajal body"/>
    <property type="evidence" value="ECO:0007669"/>
    <property type="project" value="UniProtKB-SubCell"/>
</dbReference>
<dbReference type="GO" id="GO:0071339">
    <property type="term" value="C:MLL1 complex"/>
    <property type="evidence" value="ECO:0000250"/>
    <property type="project" value="UniProtKB"/>
</dbReference>
<dbReference type="GO" id="GO:0016607">
    <property type="term" value="C:nuclear speck"/>
    <property type="evidence" value="ECO:0007669"/>
    <property type="project" value="UniProtKB-SubCell"/>
</dbReference>
<dbReference type="GO" id="GO:0005634">
    <property type="term" value="C:nucleus"/>
    <property type="evidence" value="ECO:0000250"/>
    <property type="project" value="UniProtKB"/>
</dbReference>
<dbReference type="GO" id="GO:0071011">
    <property type="term" value="C:precatalytic spliceosome"/>
    <property type="evidence" value="ECO:0000318"/>
    <property type="project" value="GO_Central"/>
</dbReference>
<dbReference type="GO" id="GO:0097526">
    <property type="term" value="C:spliceosomal tri-snRNP complex"/>
    <property type="evidence" value="ECO:0000318"/>
    <property type="project" value="GO_Central"/>
</dbReference>
<dbReference type="GO" id="GO:0071005">
    <property type="term" value="C:U2-type precatalytic spliceosome"/>
    <property type="evidence" value="ECO:0000250"/>
    <property type="project" value="UniProtKB"/>
</dbReference>
<dbReference type="GO" id="GO:0005687">
    <property type="term" value="C:U4 snRNP"/>
    <property type="evidence" value="ECO:0000318"/>
    <property type="project" value="GO_Central"/>
</dbReference>
<dbReference type="GO" id="GO:0046540">
    <property type="term" value="C:U4/U6 x U5 tri-snRNP complex"/>
    <property type="evidence" value="ECO:0000250"/>
    <property type="project" value="UniProtKB"/>
</dbReference>
<dbReference type="GO" id="GO:0005690">
    <property type="term" value="C:U4atac snRNP"/>
    <property type="evidence" value="ECO:0000250"/>
    <property type="project" value="UniProtKB"/>
</dbReference>
<dbReference type="GO" id="GO:0030622">
    <property type="term" value="F:U4atac snRNA binding"/>
    <property type="evidence" value="ECO:0000250"/>
    <property type="project" value="UniProtKB"/>
</dbReference>
<dbReference type="GO" id="GO:0000398">
    <property type="term" value="P:mRNA splicing, via spliceosome"/>
    <property type="evidence" value="ECO:0000250"/>
    <property type="project" value="UniProtKB"/>
</dbReference>
<dbReference type="GO" id="GO:0000244">
    <property type="term" value="P:spliceosomal tri-snRNP complex assembly"/>
    <property type="evidence" value="ECO:0007669"/>
    <property type="project" value="InterPro"/>
</dbReference>
<dbReference type="FunFam" id="1.10.287.4070:FF:000003">
    <property type="entry name" value="U4/U6 small nuclear ribonucleoprotein PRP31"/>
    <property type="match status" value="1"/>
</dbReference>
<dbReference type="FunFam" id="1.10.246.90:FF:000002">
    <property type="entry name" value="U4/U6 small nuclear ribonucleoprotein Prp31"/>
    <property type="match status" value="1"/>
</dbReference>
<dbReference type="Gene3D" id="1.10.287.4070">
    <property type="match status" value="1"/>
</dbReference>
<dbReference type="Gene3D" id="1.10.246.90">
    <property type="entry name" value="Nop domain"/>
    <property type="match status" value="1"/>
</dbReference>
<dbReference type="InterPro" id="IPR042239">
    <property type="entry name" value="Nop_C"/>
</dbReference>
<dbReference type="InterPro" id="IPR002687">
    <property type="entry name" value="Nop_dom"/>
</dbReference>
<dbReference type="InterPro" id="IPR036070">
    <property type="entry name" value="Nop_dom_sf"/>
</dbReference>
<dbReference type="InterPro" id="IPR012976">
    <property type="entry name" value="NOSIC"/>
</dbReference>
<dbReference type="InterPro" id="IPR027105">
    <property type="entry name" value="Prp31"/>
</dbReference>
<dbReference type="InterPro" id="IPR019175">
    <property type="entry name" value="Prp31_C"/>
</dbReference>
<dbReference type="PANTHER" id="PTHR13904">
    <property type="entry name" value="PRE-MRNA SPLICING FACTOR PRP31"/>
    <property type="match status" value="1"/>
</dbReference>
<dbReference type="PANTHER" id="PTHR13904:SF0">
    <property type="entry name" value="U4_U6 SMALL NUCLEAR RIBONUCLEOPROTEIN PRP31"/>
    <property type="match status" value="1"/>
</dbReference>
<dbReference type="Pfam" id="PF01798">
    <property type="entry name" value="Nop"/>
    <property type="match status" value="1"/>
</dbReference>
<dbReference type="Pfam" id="PF09785">
    <property type="entry name" value="Prp31_C"/>
    <property type="match status" value="1"/>
</dbReference>
<dbReference type="SMART" id="SM00931">
    <property type="entry name" value="NOSIC"/>
    <property type="match status" value="1"/>
</dbReference>
<dbReference type="SUPFAM" id="SSF89124">
    <property type="entry name" value="Nop domain"/>
    <property type="match status" value="1"/>
</dbReference>
<dbReference type="PROSITE" id="PS51358">
    <property type="entry name" value="NOP"/>
    <property type="match status" value="1"/>
</dbReference>